<evidence type="ECO:0000255" key="1">
    <source>
        <dbReference type="HAMAP-Rule" id="MF_01519"/>
    </source>
</evidence>
<sequence length="128" mass="15165">MYDNLKSLGITNPEEIDRYSLRQEANNDILKIYFQKDKGEFFAKRVKFKYPRQRKTVVADGVGQGYKEVQEISPNLRYIIDELDQICQRDRSEVDLKRKILDDLRHLESVVTNKISEIEADLEKLTRK</sequence>
<gene>
    <name evidence="1" type="primary">yaeH</name>
    <name type="ordered locus">EcolC_3496</name>
</gene>
<feature type="chain" id="PRO_1000087547" description="UPF0325 protein YaeH">
    <location>
        <begin position="1"/>
        <end position="128"/>
    </location>
</feature>
<proteinExistence type="inferred from homology"/>
<accession>B1IQH7</accession>
<organism>
    <name type="scientific">Escherichia coli (strain ATCC 8739 / DSM 1576 / NBRC 3972 / NCIMB 8545 / WDCM 00012 / Crooks)</name>
    <dbReference type="NCBI Taxonomy" id="481805"/>
    <lineage>
        <taxon>Bacteria</taxon>
        <taxon>Pseudomonadati</taxon>
        <taxon>Pseudomonadota</taxon>
        <taxon>Gammaproteobacteria</taxon>
        <taxon>Enterobacterales</taxon>
        <taxon>Enterobacteriaceae</taxon>
        <taxon>Escherichia</taxon>
    </lineage>
</organism>
<reference key="1">
    <citation type="submission" date="2008-02" db="EMBL/GenBank/DDBJ databases">
        <title>Complete sequence of Escherichia coli C str. ATCC 8739.</title>
        <authorList>
            <person name="Copeland A."/>
            <person name="Lucas S."/>
            <person name="Lapidus A."/>
            <person name="Glavina del Rio T."/>
            <person name="Dalin E."/>
            <person name="Tice H."/>
            <person name="Bruce D."/>
            <person name="Goodwin L."/>
            <person name="Pitluck S."/>
            <person name="Kiss H."/>
            <person name="Brettin T."/>
            <person name="Detter J.C."/>
            <person name="Han C."/>
            <person name="Kuske C.R."/>
            <person name="Schmutz J."/>
            <person name="Larimer F."/>
            <person name="Land M."/>
            <person name="Hauser L."/>
            <person name="Kyrpides N."/>
            <person name="Mikhailova N."/>
            <person name="Ingram L."/>
            <person name="Richardson P."/>
        </authorList>
    </citation>
    <scope>NUCLEOTIDE SEQUENCE [LARGE SCALE GENOMIC DNA]</scope>
    <source>
        <strain>ATCC 8739 / DSM 1576 / NBRC 3972 / NCIMB 8545 / WDCM 00012 / Crooks</strain>
    </source>
</reference>
<dbReference type="EMBL" id="CP000946">
    <property type="protein sequence ID" value="ACA79110.1"/>
    <property type="molecule type" value="Genomic_DNA"/>
</dbReference>
<dbReference type="RefSeq" id="WP_000272183.1">
    <property type="nucleotide sequence ID" value="NC_010468.1"/>
</dbReference>
<dbReference type="SMR" id="B1IQH7"/>
<dbReference type="KEGG" id="ecl:EcolC_3496"/>
<dbReference type="HOGENOM" id="CLU_136774_0_0_6"/>
<dbReference type="HAMAP" id="MF_01519">
    <property type="entry name" value="UPF0325"/>
    <property type="match status" value="1"/>
</dbReference>
<dbReference type="InterPro" id="IPR020911">
    <property type="entry name" value="UPF0325"/>
</dbReference>
<dbReference type="NCBIfam" id="NF010213">
    <property type="entry name" value="PRK13677.1"/>
    <property type="match status" value="1"/>
</dbReference>
<dbReference type="Pfam" id="PF11944">
    <property type="entry name" value="DUF3461"/>
    <property type="match status" value="1"/>
</dbReference>
<protein>
    <recommendedName>
        <fullName evidence="1">UPF0325 protein YaeH</fullName>
    </recommendedName>
</protein>
<comment type="similarity">
    <text evidence="1">Belongs to the UPF0325 family.</text>
</comment>
<name>YAEH_ECOLC</name>